<reference key="1">
    <citation type="journal article" date="1990" name="Nucleic Acids Res.">
        <title>DNA sequence encoding the two structural genes for the uptake hydrogenase of Rhizobium leguminosarum bv. viciae B10.</title>
        <authorList>
            <person name="Schneider C.G."/>
            <person name="Schmitt H.J."/>
            <person name="Schild C."/>
            <person name="Tichy H.V."/>
            <person name="Lotz W."/>
        </authorList>
    </citation>
    <scope>NUCLEOTIDE SEQUENCE [GENOMIC DNA]</scope>
    <source>
        <strain>B10</strain>
    </source>
</reference>
<reference key="2">
    <citation type="journal article" date="1990" name="Plant Mol. Biol.">
        <title>Nucleotide sequence of the hydrogenase structural genes from Rhizobium leguminosarum.</title>
        <authorList>
            <person name="Hidalgo E."/>
            <person name="Leyva A."/>
            <person name="Ruiz-Argueso T."/>
        </authorList>
    </citation>
    <scope>NUCLEOTIDE SEQUENCE [GENOMIC DNA]</scope>
    <source>
        <strain>128c53</strain>
    </source>
</reference>
<protein>
    <recommendedName>
        <fullName>Uptake hydrogenase small subunit</fullName>
        <ecNumber>1.12.99.6</ecNumber>
    </recommendedName>
    <alternativeName>
        <fullName>Hydrogenlyase</fullName>
    </alternativeName>
    <alternativeName>
        <fullName>Membrane-bound hydrogenase small subunit</fullName>
    </alternativeName>
</protein>
<name>MBHS_RHILV</name>
<comment type="function">
    <text>This enzyme recycles the H(2) produced by nitrogenase to increase the production of ATP and to protect nitrogenase against inhibition or damage by O(2) under carbon- or phosphate-limited conditions.</text>
</comment>
<comment type="catalytic activity">
    <reaction>
        <text>H2 + A = AH2</text>
        <dbReference type="Rhea" id="RHEA:12116"/>
        <dbReference type="ChEBI" id="CHEBI:13193"/>
        <dbReference type="ChEBI" id="CHEBI:17499"/>
        <dbReference type="ChEBI" id="CHEBI:18276"/>
        <dbReference type="EC" id="1.12.99.6"/>
    </reaction>
</comment>
<comment type="cofactor">
    <cofactor evidence="1">
        <name>[4Fe-4S] cluster</name>
        <dbReference type="ChEBI" id="CHEBI:49883"/>
    </cofactor>
    <text evidence="1">Binds 2 [4Fe-4S] clusters.</text>
</comment>
<comment type="cofactor">
    <cofactor evidence="1">
        <name>[3Fe-4S] cluster</name>
        <dbReference type="ChEBI" id="CHEBI:21137"/>
    </cofactor>
    <text evidence="1">Binds 1 [3Fe-4S] cluster.</text>
</comment>
<comment type="subunit">
    <text>Heterodimer of a large and a small subunit.</text>
</comment>
<comment type="subcellular location">
    <subcellularLocation>
        <location>Cell membrane</location>
        <topology>Peripheral membrane protein</topology>
    </subcellularLocation>
</comment>
<comment type="PTM">
    <text>Predicted to be exported by the Tat system. The position of the signal peptide cleavage has not been experimentally proven.</text>
</comment>
<comment type="similarity">
    <text evidence="3">Belongs to the [NiFe]/[NiFeSe] hydrogenase small subunit family.</text>
</comment>
<gene>
    <name type="primary">hupA</name>
    <name type="synonym">hupS</name>
</gene>
<evidence type="ECO:0000250" key="1">
    <source>
        <dbReference type="UniProtKB" id="P21853"/>
    </source>
</evidence>
<evidence type="ECO:0000255" key="2">
    <source>
        <dbReference type="PROSITE-ProRule" id="PRU00648"/>
    </source>
</evidence>
<evidence type="ECO:0000305" key="3"/>
<organism>
    <name type="scientific">Rhizobium leguminosarum bv. viciae</name>
    <dbReference type="NCBI Taxonomy" id="387"/>
    <lineage>
        <taxon>Bacteria</taxon>
        <taxon>Pseudomonadati</taxon>
        <taxon>Pseudomonadota</taxon>
        <taxon>Alphaproteobacteria</taxon>
        <taxon>Hyphomicrobiales</taxon>
        <taxon>Rhizobiaceae</taxon>
        <taxon>Rhizobium/Agrobacterium group</taxon>
        <taxon>Rhizobium</taxon>
    </lineage>
</organism>
<accession>P18637</accession>
<proteinExistence type="inferred from homology"/>
<sequence length="360" mass="39149">MATAETFYDVIRRQGITRRSFTKFCSLTAASLGFGPGAATAMAEALETKERVPVIWMHGLECTCCSESFIRSAHPLVKDVVLSMISLDYDDTIMAAAGHQAESILAETKEKYKGKYILAVEGNPPLNEGGMFCIDGGKPFVEKLKWMAEDAMAIIAWGACASWGCVQAAKPNPTQATPIDKVILDKPIIKVPGCPPIAEVMTGVVTFITTFGKLPELDRQGRPKMFYSQRIHDKCYRRPHFDAGQFVEEWDDEGARKGYCLYKMGCKGPTTYNACSTVRWNGGVSFPIQSGHGCIGCSEDGFWDNGSFYDRLTNIHQFGIEANADKVGMTAAGVVGGAIAAHAAVTAVKRLTTKREKADA</sequence>
<feature type="signal peptide" description="Tat-type signal" evidence="2">
    <location>
        <begin position="1"/>
        <end position="46"/>
    </location>
</feature>
<feature type="chain" id="PRO_0000013434" description="Uptake hydrogenase small subunit">
    <location>
        <begin position="47"/>
        <end position="360"/>
    </location>
</feature>
<feature type="binding site" evidence="1">
    <location>
        <position position="62"/>
    </location>
    <ligand>
        <name>[4Fe-4S] cluster</name>
        <dbReference type="ChEBI" id="CHEBI:49883"/>
        <label>1</label>
    </ligand>
</feature>
<feature type="binding site" evidence="1">
    <location>
        <position position="65"/>
    </location>
    <ligand>
        <name>[4Fe-4S] cluster</name>
        <dbReference type="ChEBI" id="CHEBI:49883"/>
        <label>1</label>
    </ligand>
</feature>
<feature type="binding site" evidence="1">
    <location>
        <position position="160"/>
    </location>
    <ligand>
        <name>[4Fe-4S] cluster</name>
        <dbReference type="ChEBI" id="CHEBI:49883"/>
        <label>1</label>
    </ligand>
</feature>
<feature type="binding site" evidence="1">
    <location>
        <position position="194"/>
    </location>
    <ligand>
        <name>[4Fe-4S] cluster</name>
        <dbReference type="ChEBI" id="CHEBI:49883"/>
        <label>1</label>
    </ligand>
</feature>
<feature type="binding site" evidence="1">
    <location>
        <position position="232"/>
    </location>
    <ligand>
        <name>[4Fe-4S] cluster</name>
        <dbReference type="ChEBI" id="CHEBI:49883"/>
        <label>2</label>
    </ligand>
</feature>
<feature type="binding site" evidence="1">
    <location>
        <position position="235"/>
    </location>
    <ligand>
        <name>[4Fe-4S] cluster</name>
        <dbReference type="ChEBI" id="CHEBI:49883"/>
        <label>2</label>
    </ligand>
</feature>
<feature type="binding site" evidence="1">
    <location>
        <position position="260"/>
    </location>
    <ligand>
        <name>[4Fe-4S] cluster</name>
        <dbReference type="ChEBI" id="CHEBI:49883"/>
        <label>2</label>
    </ligand>
</feature>
<feature type="binding site" evidence="1">
    <location>
        <position position="266"/>
    </location>
    <ligand>
        <name>[4Fe-4S] cluster</name>
        <dbReference type="ChEBI" id="CHEBI:49883"/>
        <label>2</label>
    </ligand>
</feature>
<feature type="binding site" evidence="1">
    <location>
        <position position="275"/>
    </location>
    <ligand>
        <name>[3Fe-4S] cluster</name>
        <dbReference type="ChEBI" id="CHEBI:21137"/>
    </ligand>
</feature>
<feature type="binding site" evidence="1">
    <location>
        <position position="294"/>
    </location>
    <ligand>
        <name>[3Fe-4S] cluster</name>
        <dbReference type="ChEBI" id="CHEBI:21137"/>
    </ligand>
</feature>
<feature type="binding site" evidence="1">
    <location>
        <position position="297"/>
    </location>
    <ligand>
        <name>[3Fe-4S] cluster</name>
        <dbReference type="ChEBI" id="CHEBI:21137"/>
    </ligand>
</feature>
<feature type="sequence conflict" description="In Ref. 1; CAA85430." evidence="3" ref="1">
    <original>C</original>
    <variation>S</variation>
    <location>
        <position position="160"/>
    </location>
</feature>
<feature type="sequence conflict" description="In Ref. 1; CAA85430." evidence="3" ref="1">
    <original>R</original>
    <variation>P</variation>
    <location>
        <position position="222"/>
    </location>
</feature>
<feature type="sequence conflict" description="In Ref. 1; CAA85430." evidence="3" ref="1">
    <original>SQR</original>
    <variation>AQP</variation>
    <location>
        <begin position="228"/>
        <end position="230"/>
    </location>
</feature>
<keyword id="KW-0003">3Fe-4S</keyword>
<keyword id="KW-0004">4Fe-4S</keyword>
<keyword id="KW-1003">Cell membrane</keyword>
<keyword id="KW-0408">Iron</keyword>
<keyword id="KW-0411">Iron-sulfur</keyword>
<keyword id="KW-0472">Membrane</keyword>
<keyword id="KW-0479">Metal-binding</keyword>
<keyword id="KW-0560">Oxidoreductase</keyword>
<keyword id="KW-0732">Signal</keyword>
<dbReference type="EC" id="1.12.99.6"/>
<dbReference type="EMBL" id="Z36981">
    <property type="protein sequence ID" value="CAA85430.1"/>
    <property type="molecule type" value="Genomic_DNA"/>
</dbReference>
<dbReference type="EMBL" id="X52974">
    <property type="protein sequence ID" value="CAA37148.1"/>
    <property type="molecule type" value="Genomic_DNA"/>
</dbReference>
<dbReference type="PIR" id="S11968">
    <property type="entry name" value="S11968"/>
</dbReference>
<dbReference type="RefSeq" id="WP_018517045.1">
    <property type="nucleotide sequence ID" value="NZ_WIEJ01000010.1"/>
</dbReference>
<dbReference type="SMR" id="P18637"/>
<dbReference type="GO" id="GO:0044569">
    <property type="term" value="C:[Ni-Fe] hydrogenase complex"/>
    <property type="evidence" value="ECO:0007669"/>
    <property type="project" value="TreeGrafter"/>
</dbReference>
<dbReference type="GO" id="GO:0009375">
    <property type="term" value="C:ferredoxin hydrogenase complex"/>
    <property type="evidence" value="ECO:0007669"/>
    <property type="project" value="InterPro"/>
</dbReference>
<dbReference type="GO" id="GO:0005886">
    <property type="term" value="C:plasma membrane"/>
    <property type="evidence" value="ECO:0007669"/>
    <property type="project" value="UniProtKB-SubCell"/>
</dbReference>
<dbReference type="GO" id="GO:0051538">
    <property type="term" value="F:3 iron, 4 sulfur cluster binding"/>
    <property type="evidence" value="ECO:0007669"/>
    <property type="project" value="UniProtKB-KW"/>
</dbReference>
<dbReference type="GO" id="GO:0051539">
    <property type="term" value="F:4 iron, 4 sulfur cluster binding"/>
    <property type="evidence" value="ECO:0007669"/>
    <property type="project" value="UniProtKB-KW"/>
</dbReference>
<dbReference type="GO" id="GO:0009055">
    <property type="term" value="F:electron transfer activity"/>
    <property type="evidence" value="ECO:0007669"/>
    <property type="project" value="TreeGrafter"/>
</dbReference>
<dbReference type="GO" id="GO:0008901">
    <property type="term" value="F:ferredoxin hydrogenase activity"/>
    <property type="evidence" value="ECO:0007669"/>
    <property type="project" value="InterPro"/>
</dbReference>
<dbReference type="GO" id="GO:0033748">
    <property type="term" value="F:hydrogenase (acceptor) activity"/>
    <property type="evidence" value="ECO:0007669"/>
    <property type="project" value="UniProtKB-EC"/>
</dbReference>
<dbReference type="GO" id="GO:0046872">
    <property type="term" value="F:metal ion binding"/>
    <property type="evidence" value="ECO:0007669"/>
    <property type="project" value="UniProtKB-KW"/>
</dbReference>
<dbReference type="GO" id="GO:0009061">
    <property type="term" value="P:anaerobic respiration"/>
    <property type="evidence" value="ECO:0007669"/>
    <property type="project" value="TreeGrafter"/>
</dbReference>
<dbReference type="FunFam" id="4.10.480.10:FF:000002">
    <property type="entry name" value="Hydrogenase-1 small chain"/>
    <property type="match status" value="1"/>
</dbReference>
<dbReference type="Gene3D" id="4.10.480.10">
    <property type="entry name" value="Cytochrome-c3 hydrogenase, C-terminal domain"/>
    <property type="match status" value="1"/>
</dbReference>
<dbReference type="Gene3D" id="3.40.50.700">
    <property type="entry name" value="NADH:ubiquinone oxidoreductase-like, 20kDa subunit"/>
    <property type="match status" value="1"/>
</dbReference>
<dbReference type="InterPro" id="IPR027394">
    <property type="entry name" value="Cytochrome-c3_hydrogenase_C"/>
</dbReference>
<dbReference type="InterPro" id="IPR006137">
    <property type="entry name" value="NADH_UbQ_OxRdtase-like_20kDa"/>
</dbReference>
<dbReference type="InterPro" id="IPR037148">
    <property type="entry name" value="NiFe-Hase_small_C_sf"/>
</dbReference>
<dbReference type="InterPro" id="IPR037024">
    <property type="entry name" value="NiFe_Hase_small_N_sf"/>
</dbReference>
<dbReference type="InterPro" id="IPR001821">
    <property type="entry name" value="NiFe_hydrogenase_ssu"/>
</dbReference>
<dbReference type="InterPro" id="IPR006311">
    <property type="entry name" value="TAT_signal"/>
</dbReference>
<dbReference type="NCBIfam" id="TIGR00391">
    <property type="entry name" value="hydA"/>
    <property type="match status" value="1"/>
</dbReference>
<dbReference type="PANTHER" id="PTHR30013:SF6">
    <property type="entry name" value="HYDROGENASE-1 SMALL CHAIN"/>
    <property type="match status" value="1"/>
</dbReference>
<dbReference type="PANTHER" id="PTHR30013">
    <property type="entry name" value="NIFE / NIFESE HYDROGENASE SMALL SUBUNIT FAMILY MEMBER"/>
    <property type="match status" value="1"/>
</dbReference>
<dbReference type="Pfam" id="PF14720">
    <property type="entry name" value="NiFe_hyd_SSU_C"/>
    <property type="match status" value="1"/>
</dbReference>
<dbReference type="Pfam" id="PF01058">
    <property type="entry name" value="Oxidored_q6"/>
    <property type="match status" value="1"/>
</dbReference>
<dbReference type="PIRSF" id="PIRSF000310">
    <property type="entry name" value="NiFe_hyd_ssu"/>
    <property type="match status" value="1"/>
</dbReference>
<dbReference type="PRINTS" id="PR00614">
    <property type="entry name" value="NIHGNASESMLL"/>
</dbReference>
<dbReference type="SUPFAM" id="SSF56770">
    <property type="entry name" value="HydA/Nqo6-like"/>
    <property type="match status" value="1"/>
</dbReference>
<dbReference type="PROSITE" id="PS51318">
    <property type="entry name" value="TAT"/>
    <property type="match status" value="1"/>
</dbReference>